<accession>Q7MVG0</accession>
<protein>
    <recommendedName>
        <fullName evidence="1">tRNA1(Val) (adenine(37)-N6)-methyltransferase</fullName>
        <ecNumber evidence="1">2.1.1.223</ecNumber>
    </recommendedName>
    <alternativeName>
        <fullName evidence="1">tRNA m6A37 methyltransferase</fullName>
    </alternativeName>
</protein>
<comment type="function">
    <text evidence="1">Specifically methylates the adenine in position 37 of tRNA(1)(Val) (anticodon cmo5UAC).</text>
</comment>
<comment type="catalytic activity">
    <reaction evidence="1">
        <text>adenosine(37) in tRNA1(Val) + S-adenosyl-L-methionine = N(6)-methyladenosine(37) in tRNA1(Val) + S-adenosyl-L-homocysteine + H(+)</text>
        <dbReference type="Rhea" id="RHEA:43160"/>
        <dbReference type="Rhea" id="RHEA-COMP:10369"/>
        <dbReference type="Rhea" id="RHEA-COMP:10370"/>
        <dbReference type="ChEBI" id="CHEBI:15378"/>
        <dbReference type="ChEBI" id="CHEBI:57856"/>
        <dbReference type="ChEBI" id="CHEBI:59789"/>
        <dbReference type="ChEBI" id="CHEBI:74411"/>
        <dbReference type="ChEBI" id="CHEBI:74449"/>
        <dbReference type="EC" id="2.1.1.223"/>
    </reaction>
</comment>
<comment type="subcellular location">
    <subcellularLocation>
        <location evidence="1">Cytoplasm</location>
    </subcellularLocation>
</comment>
<comment type="similarity">
    <text evidence="1">Belongs to the methyltransferase superfamily. tRNA (adenine-N(6)-)-methyltransferase family.</text>
</comment>
<gene>
    <name type="ordered locus">PG_1104</name>
</gene>
<name>TRMN6_PORGI</name>
<organism>
    <name type="scientific">Porphyromonas gingivalis (strain ATCC BAA-308 / W83)</name>
    <dbReference type="NCBI Taxonomy" id="242619"/>
    <lineage>
        <taxon>Bacteria</taxon>
        <taxon>Pseudomonadati</taxon>
        <taxon>Bacteroidota</taxon>
        <taxon>Bacteroidia</taxon>
        <taxon>Bacteroidales</taxon>
        <taxon>Porphyromonadaceae</taxon>
        <taxon>Porphyromonas</taxon>
    </lineage>
</organism>
<keyword id="KW-0963">Cytoplasm</keyword>
<keyword id="KW-0489">Methyltransferase</keyword>
<keyword id="KW-1185">Reference proteome</keyword>
<keyword id="KW-0949">S-adenosyl-L-methionine</keyword>
<keyword id="KW-0808">Transferase</keyword>
<keyword id="KW-0819">tRNA processing</keyword>
<dbReference type="EC" id="2.1.1.223" evidence="1"/>
<dbReference type="EMBL" id="AE015924">
    <property type="protein sequence ID" value="AAQ66215.1"/>
    <property type="molecule type" value="Genomic_DNA"/>
</dbReference>
<dbReference type="RefSeq" id="WP_005873692.1">
    <property type="nucleotide sequence ID" value="NC_002950.2"/>
</dbReference>
<dbReference type="SMR" id="Q7MVG0"/>
<dbReference type="STRING" id="242619.PG_1104"/>
<dbReference type="DNASU" id="2553335"/>
<dbReference type="EnsemblBacteria" id="AAQ66215">
    <property type="protein sequence ID" value="AAQ66215"/>
    <property type="gene ID" value="PG_1104"/>
</dbReference>
<dbReference type="KEGG" id="pgi:PG_1104"/>
<dbReference type="PATRIC" id="fig|242619.8.peg.1021"/>
<dbReference type="eggNOG" id="COG4123">
    <property type="taxonomic scope" value="Bacteria"/>
</dbReference>
<dbReference type="HOGENOM" id="CLU_061983_0_0_10"/>
<dbReference type="BioCyc" id="PGIN242619:G1G02-1032-MONOMER"/>
<dbReference type="Proteomes" id="UP000000588">
    <property type="component" value="Chromosome"/>
</dbReference>
<dbReference type="GO" id="GO:0005737">
    <property type="term" value="C:cytoplasm"/>
    <property type="evidence" value="ECO:0007669"/>
    <property type="project" value="UniProtKB-SubCell"/>
</dbReference>
<dbReference type="GO" id="GO:0003676">
    <property type="term" value="F:nucleic acid binding"/>
    <property type="evidence" value="ECO:0007669"/>
    <property type="project" value="InterPro"/>
</dbReference>
<dbReference type="GO" id="GO:0016430">
    <property type="term" value="F:tRNA (adenine-N6)-methyltransferase activity"/>
    <property type="evidence" value="ECO:0007669"/>
    <property type="project" value="UniProtKB-UniRule"/>
</dbReference>
<dbReference type="GO" id="GO:0032259">
    <property type="term" value="P:methylation"/>
    <property type="evidence" value="ECO:0007669"/>
    <property type="project" value="UniProtKB-KW"/>
</dbReference>
<dbReference type="GO" id="GO:0008033">
    <property type="term" value="P:tRNA processing"/>
    <property type="evidence" value="ECO:0007669"/>
    <property type="project" value="UniProtKB-UniRule"/>
</dbReference>
<dbReference type="CDD" id="cd02440">
    <property type="entry name" value="AdoMet_MTases"/>
    <property type="match status" value="1"/>
</dbReference>
<dbReference type="Gene3D" id="3.40.50.150">
    <property type="entry name" value="Vaccinia Virus protein VP39"/>
    <property type="match status" value="1"/>
</dbReference>
<dbReference type="HAMAP" id="MF_01872">
    <property type="entry name" value="tRNA_methyltr_YfiC"/>
    <property type="match status" value="1"/>
</dbReference>
<dbReference type="InterPro" id="IPR002052">
    <property type="entry name" value="DNA_methylase_N6_adenine_CS"/>
</dbReference>
<dbReference type="InterPro" id="IPR029063">
    <property type="entry name" value="SAM-dependent_MTases_sf"/>
</dbReference>
<dbReference type="InterPro" id="IPR007848">
    <property type="entry name" value="Small_mtfrase_dom"/>
</dbReference>
<dbReference type="InterPro" id="IPR050210">
    <property type="entry name" value="tRNA_Adenine-N(6)_MTase"/>
</dbReference>
<dbReference type="InterPro" id="IPR022882">
    <property type="entry name" value="tRNA_adenine-N6_MeTrfase"/>
</dbReference>
<dbReference type="PANTHER" id="PTHR47739">
    <property type="entry name" value="TRNA1(VAL) (ADENINE(37)-N6)-METHYLTRANSFERASE"/>
    <property type="match status" value="1"/>
</dbReference>
<dbReference type="PANTHER" id="PTHR47739:SF1">
    <property type="entry name" value="TRNA1(VAL) (ADENINE(37)-N6)-METHYLTRANSFERASE"/>
    <property type="match status" value="1"/>
</dbReference>
<dbReference type="Pfam" id="PF05175">
    <property type="entry name" value="MTS"/>
    <property type="match status" value="1"/>
</dbReference>
<dbReference type="SUPFAM" id="SSF53335">
    <property type="entry name" value="S-adenosyl-L-methionine-dependent methyltransferases"/>
    <property type="match status" value="1"/>
</dbReference>
<dbReference type="PROSITE" id="PS00092">
    <property type="entry name" value="N6_MTASE"/>
    <property type="match status" value="1"/>
</dbReference>
<evidence type="ECO:0000255" key="1">
    <source>
        <dbReference type="HAMAP-Rule" id="MF_01872"/>
    </source>
</evidence>
<sequence length="255" mass="28215">MPTDIFSFKQFDIDQTGCAMRVGTDGVLLGAWAGEDAAGSIPQHCLDIGTGTGLIALMLAQRFPQARVQGIEIDPIAAECARANAAASPFSDRIVIASGDILDSSLESLIGNQRFDLIVSNPPFFKSSMHAPDRQRTMARHEETLPLEKLICRASELLSPQGRLALITPRDRLKDLRLYAATYRLVSSRLTEVRTLPHKEPKRLLSEWRPADTAIDRSPFTDTLIIHPATGYYSPEYVRLTEPFYTTSFRILAVG</sequence>
<reference key="1">
    <citation type="journal article" date="2003" name="J. Bacteriol.">
        <title>Complete genome sequence of the oral pathogenic bacterium Porphyromonas gingivalis strain W83.</title>
        <authorList>
            <person name="Nelson K.E."/>
            <person name="Fleischmann R.D."/>
            <person name="DeBoy R.T."/>
            <person name="Paulsen I.T."/>
            <person name="Fouts D.E."/>
            <person name="Eisen J.A."/>
            <person name="Daugherty S.C."/>
            <person name="Dodson R.J."/>
            <person name="Durkin A.S."/>
            <person name="Gwinn M.L."/>
            <person name="Haft D.H."/>
            <person name="Kolonay J.F."/>
            <person name="Nelson W.C."/>
            <person name="Mason T.M."/>
            <person name="Tallon L."/>
            <person name="Gray J."/>
            <person name="Granger D."/>
            <person name="Tettelin H."/>
            <person name="Dong H."/>
            <person name="Galvin J.L."/>
            <person name="Duncan M.J."/>
            <person name="Dewhirst F.E."/>
            <person name="Fraser C.M."/>
        </authorList>
    </citation>
    <scope>NUCLEOTIDE SEQUENCE [LARGE SCALE GENOMIC DNA]</scope>
    <source>
        <strain>ATCC BAA-308 / W83</strain>
    </source>
</reference>
<proteinExistence type="inferred from homology"/>
<feature type="chain" id="PRO_0000387398" description="tRNA1(Val) (adenine(37)-N6)-methyltransferase">
    <location>
        <begin position="1"/>
        <end position="255"/>
    </location>
</feature>